<comment type="function">
    <text evidence="1">May function as an output molecule from the suprachiasmatic nucleus (SCN) that transmits behavioral circadian rhythm. May also function locally within the SCN to synchronize output. Potently contracts gastrointestinal (GI) smooth muscle (By similarity).</text>
</comment>
<comment type="subcellular location">
    <subcellularLocation>
        <location evidence="1">Secreted</location>
    </subcellularLocation>
</comment>
<comment type="tissue specificity">
    <text>Expressed at high levels in testis and at lower levels in brain, lung, ovary, spleen, thymus and uterus.</text>
</comment>
<comment type="induction">
    <text evidence="3">Activated by CLOCK and BMAL1 heterodimers and light; inhibited by period genes (PER1, PER2 and PER3) and cryptochrome genes (CRY1 and CRY2).</text>
</comment>
<comment type="similarity">
    <text evidence="3">Belongs to the AVIT (prokineticin) family.</text>
</comment>
<protein>
    <recommendedName>
        <fullName>Prokineticin-2</fullName>
        <shortName>PK2</shortName>
    </recommendedName>
</protein>
<evidence type="ECO:0000250" key="1"/>
<evidence type="ECO:0000255" key="2"/>
<evidence type="ECO:0000305" key="3"/>
<organism>
    <name type="scientific">Rattus norvegicus</name>
    <name type="common">Rat</name>
    <dbReference type="NCBI Taxonomy" id="10116"/>
    <lineage>
        <taxon>Eukaryota</taxon>
        <taxon>Metazoa</taxon>
        <taxon>Chordata</taxon>
        <taxon>Craniata</taxon>
        <taxon>Vertebrata</taxon>
        <taxon>Euteleostomi</taxon>
        <taxon>Mammalia</taxon>
        <taxon>Eutheria</taxon>
        <taxon>Euarchontoglires</taxon>
        <taxon>Glires</taxon>
        <taxon>Rodentia</taxon>
        <taxon>Myomorpha</taxon>
        <taxon>Muroidea</taxon>
        <taxon>Muridae</taxon>
        <taxon>Murinae</taxon>
        <taxon>Rattus</taxon>
    </lineage>
</organism>
<proteinExistence type="evidence at transcript level"/>
<gene>
    <name type="primary">Prok2</name>
    <name type="synonym">Bv8</name>
</gene>
<feature type="signal peptide" evidence="2">
    <location>
        <begin position="1"/>
        <end position="26"/>
    </location>
</feature>
<feature type="chain" id="PRO_0000025811" description="Prokineticin-2">
    <location>
        <begin position="27"/>
        <end position="107"/>
    </location>
</feature>
<feature type="disulfide bond" evidence="1">
    <location>
        <begin position="33"/>
        <end position="45"/>
    </location>
</feature>
<feature type="disulfide bond" evidence="1">
    <location>
        <begin position="39"/>
        <end position="57"/>
    </location>
</feature>
<feature type="disulfide bond" evidence="1">
    <location>
        <begin position="44"/>
        <end position="85"/>
    </location>
</feature>
<feature type="disulfide bond" evidence="1">
    <location>
        <begin position="67"/>
        <end position="93"/>
    </location>
</feature>
<feature type="disulfide bond" evidence="1">
    <location>
        <begin position="87"/>
        <end position="103"/>
    </location>
</feature>
<keyword id="KW-0090">Biological rhythms</keyword>
<keyword id="KW-1015">Disulfide bond</keyword>
<keyword id="KW-0527">Neuropeptide</keyword>
<keyword id="KW-1185">Reference proteome</keyword>
<keyword id="KW-0964">Secreted</keyword>
<keyword id="KW-0732">Signal</keyword>
<accession>Q8R413</accession>
<name>PROK2_RAT</name>
<sequence>MEDPRCAPLLLLLLLPLLLTPPAGDAAVITGACDKDSQCGGGMCCAVSIWVKSIRICTPMGQVGDSCHPLTRKVPFWGRRMHHTCPCLPGLACLRTSFNRFICLARK</sequence>
<reference key="1">
    <citation type="journal article" date="2002" name="Biochem. Biophys. Res. Commun.">
        <title>Isolation and identification of EG-VEGF/prokineticins as cognate ligands for two orphan G-protein-coupled receptors.</title>
        <authorList>
            <person name="Masuda Y."/>
            <person name="Takatsu Y."/>
            <person name="Terao Y."/>
            <person name="Kumano S."/>
            <person name="Ishibashi Y."/>
            <person name="Suenaga M."/>
            <person name="Abe M."/>
            <person name="Fukusumi S."/>
            <person name="Watanabe T."/>
            <person name="Shintani Y."/>
            <person name="Yamada T."/>
            <person name="Hinuma S."/>
            <person name="Inatomi N."/>
            <person name="Ohtaki T."/>
            <person name="Onda H."/>
            <person name="Fujino M."/>
        </authorList>
    </citation>
    <scope>NUCLEOTIDE SEQUENCE [MRNA]</scope>
    <source>
        <strain>Sprague-Dawley</strain>
    </source>
</reference>
<reference key="2">
    <citation type="journal article" date="2002" name="Nature">
        <title>Prokineticin 2 transmits the behavioural circadian rhythm of the suprachiasmatic nucleus.</title>
        <authorList>
            <person name="Cheng M.Y."/>
            <person name="Bullock C.M."/>
            <person name="Li C."/>
            <person name="Lee A.G."/>
            <person name="Bermak J.C."/>
            <person name="Belluzzi J."/>
            <person name="Weaver D.R."/>
            <person name="Leslie F.M."/>
            <person name="Zhou Q.-Y."/>
        </authorList>
    </citation>
    <scope>EFFECT ON CIRCADIAN LOCOMOTOR ACTIVITY</scope>
</reference>
<dbReference type="EMBL" id="AY089984">
    <property type="protein sequence ID" value="AAM09105.1"/>
    <property type="molecule type" value="mRNA"/>
</dbReference>
<dbReference type="RefSeq" id="NP_620207.1">
    <property type="nucleotide sequence ID" value="NM_138852.3"/>
</dbReference>
<dbReference type="SMR" id="Q8R413"/>
<dbReference type="FunCoup" id="Q8R413">
    <property type="interactions" value="71"/>
</dbReference>
<dbReference type="STRING" id="10116.ENSRNOP00000015058"/>
<dbReference type="ChEMBL" id="CHEMBL1949485"/>
<dbReference type="Ensembl" id="ENSRNOT00000015075.3">
    <property type="protein sequence ID" value="ENSRNOP00000015075.1"/>
    <property type="gene ID" value="ENSRNOG00000010898.5"/>
</dbReference>
<dbReference type="GeneID" id="192206"/>
<dbReference type="KEGG" id="rno:192206"/>
<dbReference type="UCSC" id="RGD:620280">
    <property type="organism name" value="rat"/>
</dbReference>
<dbReference type="AGR" id="RGD:620280"/>
<dbReference type="CTD" id="60675"/>
<dbReference type="RGD" id="620280">
    <property type="gene designation" value="Prok2"/>
</dbReference>
<dbReference type="GeneTree" id="ENSGT00940000162026"/>
<dbReference type="HOGENOM" id="CLU_143202_1_0_1"/>
<dbReference type="InParanoid" id="Q8R413"/>
<dbReference type="Reactome" id="R-RNO-375276">
    <property type="pathway name" value="Peptide ligand-binding receptors"/>
</dbReference>
<dbReference type="Reactome" id="R-RNO-416476">
    <property type="pathway name" value="G alpha (q) signalling events"/>
</dbReference>
<dbReference type="PRO" id="PR:Q8R413"/>
<dbReference type="Proteomes" id="UP000002494">
    <property type="component" value="Chromosome 4"/>
</dbReference>
<dbReference type="Bgee" id="ENSRNOG00000010898">
    <property type="expression patterns" value="Expressed in testis and 7 other cell types or tissues"/>
</dbReference>
<dbReference type="ExpressionAtlas" id="Q8R413">
    <property type="expression patterns" value="baseline and differential"/>
</dbReference>
<dbReference type="GO" id="GO:0005576">
    <property type="term" value="C:extracellular region"/>
    <property type="evidence" value="ECO:0007669"/>
    <property type="project" value="UniProtKB-SubCell"/>
</dbReference>
<dbReference type="GO" id="GO:0001664">
    <property type="term" value="F:G protein-coupled receptor binding"/>
    <property type="evidence" value="ECO:0000314"/>
    <property type="project" value="RGD"/>
</dbReference>
<dbReference type="GO" id="GO:0001525">
    <property type="term" value="P:angiogenesis"/>
    <property type="evidence" value="ECO:0000266"/>
    <property type="project" value="RGD"/>
</dbReference>
<dbReference type="GO" id="GO:0006935">
    <property type="term" value="P:chemotaxis"/>
    <property type="evidence" value="ECO:0000266"/>
    <property type="project" value="RGD"/>
</dbReference>
<dbReference type="GO" id="GO:0007623">
    <property type="term" value="P:circadian rhythm"/>
    <property type="evidence" value="ECO:0000266"/>
    <property type="project" value="RGD"/>
</dbReference>
<dbReference type="GO" id="GO:0001935">
    <property type="term" value="P:endothelial cell proliferation"/>
    <property type="evidence" value="ECO:0000266"/>
    <property type="project" value="RGD"/>
</dbReference>
<dbReference type="GO" id="GO:0043066">
    <property type="term" value="P:negative regulation of apoptotic process"/>
    <property type="evidence" value="ECO:0000266"/>
    <property type="project" value="RGD"/>
</dbReference>
<dbReference type="GO" id="GO:0007218">
    <property type="term" value="P:neuropeptide signaling pathway"/>
    <property type="evidence" value="ECO:0007669"/>
    <property type="project" value="UniProtKB-KW"/>
</dbReference>
<dbReference type="GO" id="GO:0045987">
    <property type="term" value="P:positive regulation of smooth muscle contraction"/>
    <property type="evidence" value="ECO:0000266"/>
    <property type="project" value="RGD"/>
</dbReference>
<dbReference type="GO" id="GO:0007283">
    <property type="term" value="P:spermatogenesis"/>
    <property type="evidence" value="ECO:0000266"/>
    <property type="project" value="RGD"/>
</dbReference>
<dbReference type="FunFam" id="2.10.80.10:FF:000002">
    <property type="entry name" value="prokineticin-2 isoform X2"/>
    <property type="match status" value="1"/>
</dbReference>
<dbReference type="Gene3D" id="2.10.80.10">
    <property type="entry name" value="Lipase, subunit A"/>
    <property type="match status" value="1"/>
</dbReference>
<dbReference type="InterPro" id="IPR009523">
    <property type="entry name" value="Prokineticin"/>
</dbReference>
<dbReference type="InterPro" id="IPR023569">
    <property type="entry name" value="Prokineticin_domain"/>
</dbReference>
<dbReference type="PANTHER" id="PTHR18821">
    <property type="entry name" value="PROKINETICIN"/>
    <property type="match status" value="1"/>
</dbReference>
<dbReference type="PANTHER" id="PTHR18821:SF8">
    <property type="entry name" value="PROKINETICIN-2"/>
    <property type="match status" value="1"/>
</dbReference>
<dbReference type="Pfam" id="PF06607">
    <property type="entry name" value="Prokineticin"/>
    <property type="match status" value="1"/>
</dbReference>
<dbReference type="SUPFAM" id="SSF57190">
    <property type="entry name" value="Colipase-like"/>
    <property type="match status" value="2"/>
</dbReference>